<evidence type="ECO:0000255" key="1">
    <source>
        <dbReference type="HAMAP-Rule" id="MF_01007"/>
    </source>
</evidence>
<feature type="chain" id="PRO_0000386703" description="Ribosomal RNA small subunit methyltransferase H">
    <location>
        <begin position="1"/>
        <end position="312"/>
    </location>
</feature>
<feature type="binding site" evidence="1">
    <location>
        <begin position="38"/>
        <end position="40"/>
    </location>
    <ligand>
        <name>S-adenosyl-L-methionine</name>
        <dbReference type="ChEBI" id="CHEBI:59789"/>
    </ligand>
</feature>
<feature type="binding site" evidence="1">
    <location>
        <position position="58"/>
    </location>
    <ligand>
        <name>S-adenosyl-L-methionine</name>
        <dbReference type="ChEBI" id="CHEBI:59789"/>
    </ligand>
</feature>
<feature type="binding site" evidence="1">
    <location>
        <position position="84"/>
    </location>
    <ligand>
        <name>S-adenosyl-L-methionine</name>
        <dbReference type="ChEBI" id="CHEBI:59789"/>
    </ligand>
</feature>
<feature type="binding site" evidence="1">
    <location>
        <position position="104"/>
    </location>
    <ligand>
        <name>S-adenosyl-L-methionine</name>
        <dbReference type="ChEBI" id="CHEBI:59789"/>
    </ligand>
</feature>
<feature type="binding site" evidence="1">
    <location>
        <position position="111"/>
    </location>
    <ligand>
        <name>S-adenosyl-L-methionine</name>
        <dbReference type="ChEBI" id="CHEBI:59789"/>
    </ligand>
</feature>
<comment type="function">
    <text evidence="1">Specifically methylates the N4 position of cytidine in position 1402 (C1402) of 16S rRNA.</text>
</comment>
<comment type="catalytic activity">
    <reaction evidence="1">
        <text>cytidine(1402) in 16S rRNA + S-adenosyl-L-methionine = N(4)-methylcytidine(1402) in 16S rRNA + S-adenosyl-L-homocysteine + H(+)</text>
        <dbReference type="Rhea" id="RHEA:42928"/>
        <dbReference type="Rhea" id="RHEA-COMP:10286"/>
        <dbReference type="Rhea" id="RHEA-COMP:10287"/>
        <dbReference type="ChEBI" id="CHEBI:15378"/>
        <dbReference type="ChEBI" id="CHEBI:57856"/>
        <dbReference type="ChEBI" id="CHEBI:59789"/>
        <dbReference type="ChEBI" id="CHEBI:74506"/>
        <dbReference type="ChEBI" id="CHEBI:82748"/>
        <dbReference type="EC" id="2.1.1.199"/>
    </reaction>
</comment>
<comment type="subcellular location">
    <subcellularLocation>
        <location evidence="1">Cytoplasm</location>
    </subcellularLocation>
</comment>
<comment type="similarity">
    <text evidence="1">Belongs to the methyltransferase superfamily. RsmH family.</text>
</comment>
<gene>
    <name evidence="1" type="primary">rsmH</name>
    <name type="synonym">mraW</name>
    <name type="ordered locus">ABO_0590</name>
</gene>
<name>RSMH_ALCBS</name>
<sequence length="312" mass="34655">MTTEDTQYAHQPVMLEEVLDMWFSQSEGFYVDGTFGRGGHSRALLSRLGENGRLIGIDRDPQAIAAGQQLAASDSRFHMMAGRFDCLPQAVEQAGRPIDGLLLDLGVSSPQLDDAARGFSFLRDGPLDMRMDPTQGESVAEWLSYAAEKDIANVLYRYGEERKSRWIAKRICETRKEQPITRTLQLADLIESVLGRNEQGKHPATRSFQALRIHINGELDALDQVLEQSLETLAIGGRLAIISFHSLEDRIVKLFIRDHSGRAPKGRGGLPLGDELPQRLEPVGKVMRASKAELKVNVRSRSAVLRIAEKVA</sequence>
<keyword id="KW-0963">Cytoplasm</keyword>
<keyword id="KW-0489">Methyltransferase</keyword>
<keyword id="KW-1185">Reference proteome</keyword>
<keyword id="KW-0698">rRNA processing</keyword>
<keyword id="KW-0949">S-adenosyl-L-methionine</keyword>
<keyword id="KW-0808">Transferase</keyword>
<protein>
    <recommendedName>
        <fullName evidence="1">Ribosomal RNA small subunit methyltransferase H</fullName>
        <ecNumber evidence="1">2.1.1.199</ecNumber>
    </recommendedName>
    <alternativeName>
        <fullName evidence="1">16S rRNA m(4)C1402 methyltransferase</fullName>
    </alternativeName>
    <alternativeName>
        <fullName evidence="1">rRNA (cytosine-N(4)-)-methyltransferase RsmH</fullName>
    </alternativeName>
</protein>
<reference key="1">
    <citation type="journal article" date="2006" name="Nat. Biotechnol.">
        <title>Genome sequence of the ubiquitous hydrocarbon-degrading marine bacterium Alcanivorax borkumensis.</title>
        <authorList>
            <person name="Schneiker S."/>
            <person name="Martins dos Santos V.A.P."/>
            <person name="Bartels D."/>
            <person name="Bekel T."/>
            <person name="Brecht M."/>
            <person name="Buhrmester J."/>
            <person name="Chernikova T.N."/>
            <person name="Denaro R."/>
            <person name="Ferrer M."/>
            <person name="Gertler C."/>
            <person name="Goesmann A."/>
            <person name="Golyshina O.V."/>
            <person name="Kaminski F."/>
            <person name="Khachane A.N."/>
            <person name="Lang S."/>
            <person name="Linke B."/>
            <person name="McHardy A.C."/>
            <person name="Meyer F."/>
            <person name="Nechitaylo T."/>
            <person name="Puehler A."/>
            <person name="Regenhardt D."/>
            <person name="Rupp O."/>
            <person name="Sabirova J.S."/>
            <person name="Selbitschka W."/>
            <person name="Yakimov M.M."/>
            <person name="Timmis K.N."/>
            <person name="Vorhoelter F.-J."/>
            <person name="Weidner S."/>
            <person name="Kaiser O."/>
            <person name="Golyshin P.N."/>
        </authorList>
    </citation>
    <scope>NUCLEOTIDE SEQUENCE [LARGE SCALE GENOMIC DNA]</scope>
    <source>
        <strain>ATCC 700651 / DSM 11573 / NCIMB 13689 / SK2</strain>
    </source>
</reference>
<accession>Q0VS10</accession>
<organism>
    <name type="scientific">Alcanivorax borkumensis (strain ATCC 700651 / DSM 11573 / NCIMB 13689 / SK2)</name>
    <dbReference type="NCBI Taxonomy" id="393595"/>
    <lineage>
        <taxon>Bacteria</taxon>
        <taxon>Pseudomonadati</taxon>
        <taxon>Pseudomonadota</taxon>
        <taxon>Gammaproteobacteria</taxon>
        <taxon>Oceanospirillales</taxon>
        <taxon>Alcanivoracaceae</taxon>
        <taxon>Alcanivorax</taxon>
    </lineage>
</organism>
<dbReference type="EC" id="2.1.1.199" evidence="1"/>
<dbReference type="EMBL" id="AM286690">
    <property type="protein sequence ID" value="CAL16038.1"/>
    <property type="molecule type" value="Genomic_DNA"/>
</dbReference>
<dbReference type="RefSeq" id="WP_011587876.1">
    <property type="nucleotide sequence ID" value="NC_008260.1"/>
</dbReference>
<dbReference type="SMR" id="Q0VS10"/>
<dbReference type="STRING" id="393595.ABO_0590"/>
<dbReference type="KEGG" id="abo:ABO_0590"/>
<dbReference type="eggNOG" id="COG0275">
    <property type="taxonomic scope" value="Bacteria"/>
</dbReference>
<dbReference type="HOGENOM" id="CLU_038422_2_0_6"/>
<dbReference type="OrthoDB" id="9806637at2"/>
<dbReference type="Proteomes" id="UP000008871">
    <property type="component" value="Chromosome"/>
</dbReference>
<dbReference type="GO" id="GO:0005737">
    <property type="term" value="C:cytoplasm"/>
    <property type="evidence" value="ECO:0007669"/>
    <property type="project" value="UniProtKB-SubCell"/>
</dbReference>
<dbReference type="GO" id="GO:0071424">
    <property type="term" value="F:rRNA (cytosine-N4-)-methyltransferase activity"/>
    <property type="evidence" value="ECO:0007669"/>
    <property type="project" value="UniProtKB-UniRule"/>
</dbReference>
<dbReference type="GO" id="GO:0070475">
    <property type="term" value="P:rRNA base methylation"/>
    <property type="evidence" value="ECO:0007669"/>
    <property type="project" value="UniProtKB-UniRule"/>
</dbReference>
<dbReference type="Gene3D" id="1.10.150.170">
    <property type="entry name" value="Putative methyltransferase TM0872, insert domain"/>
    <property type="match status" value="1"/>
</dbReference>
<dbReference type="Gene3D" id="3.40.50.150">
    <property type="entry name" value="Vaccinia Virus protein VP39"/>
    <property type="match status" value="1"/>
</dbReference>
<dbReference type="HAMAP" id="MF_01007">
    <property type="entry name" value="16SrRNA_methyltr_H"/>
    <property type="match status" value="1"/>
</dbReference>
<dbReference type="InterPro" id="IPR002903">
    <property type="entry name" value="RsmH"/>
</dbReference>
<dbReference type="InterPro" id="IPR023397">
    <property type="entry name" value="SAM-dep_MeTrfase_MraW_recog"/>
</dbReference>
<dbReference type="InterPro" id="IPR029063">
    <property type="entry name" value="SAM-dependent_MTases_sf"/>
</dbReference>
<dbReference type="NCBIfam" id="TIGR00006">
    <property type="entry name" value="16S rRNA (cytosine(1402)-N(4))-methyltransferase RsmH"/>
    <property type="match status" value="1"/>
</dbReference>
<dbReference type="PANTHER" id="PTHR11265:SF0">
    <property type="entry name" value="12S RRNA N4-METHYLCYTIDINE METHYLTRANSFERASE"/>
    <property type="match status" value="1"/>
</dbReference>
<dbReference type="PANTHER" id="PTHR11265">
    <property type="entry name" value="S-ADENOSYL-METHYLTRANSFERASE MRAW"/>
    <property type="match status" value="1"/>
</dbReference>
<dbReference type="Pfam" id="PF01795">
    <property type="entry name" value="Methyltransf_5"/>
    <property type="match status" value="1"/>
</dbReference>
<dbReference type="PIRSF" id="PIRSF004486">
    <property type="entry name" value="MraW"/>
    <property type="match status" value="1"/>
</dbReference>
<dbReference type="SUPFAM" id="SSF81799">
    <property type="entry name" value="Putative methyltransferase TM0872, insert domain"/>
    <property type="match status" value="1"/>
</dbReference>
<dbReference type="SUPFAM" id="SSF53335">
    <property type="entry name" value="S-adenosyl-L-methionine-dependent methyltransferases"/>
    <property type="match status" value="1"/>
</dbReference>
<proteinExistence type="inferred from homology"/>